<evidence type="ECO:0000250" key="1">
    <source>
        <dbReference type="UniProtKB" id="P02070"/>
    </source>
</evidence>
<evidence type="ECO:0000255" key="2">
    <source>
        <dbReference type="PROSITE-ProRule" id="PRU00238"/>
    </source>
</evidence>
<evidence type="ECO:0000269" key="3">
    <source>
    </source>
</evidence>
<evidence type="ECO:0000303" key="4">
    <source>
    </source>
</evidence>
<evidence type="ECO:0000305" key="5"/>
<evidence type="ECO:0000305" key="6">
    <source>
    </source>
</evidence>
<dbReference type="SMR" id="C0HJZ5"/>
<dbReference type="GO" id="GO:0072562">
    <property type="term" value="C:blood microparticle"/>
    <property type="evidence" value="ECO:0007669"/>
    <property type="project" value="TreeGrafter"/>
</dbReference>
<dbReference type="GO" id="GO:0031838">
    <property type="term" value="C:haptoglobin-hemoglobin complex"/>
    <property type="evidence" value="ECO:0007669"/>
    <property type="project" value="TreeGrafter"/>
</dbReference>
<dbReference type="GO" id="GO:0005833">
    <property type="term" value="C:hemoglobin complex"/>
    <property type="evidence" value="ECO:0007669"/>
    <property type="project" value="TreeGrafter"/>
</dbReference>
<dbReference type="GO" id="GO:0031720">
    <property type="term" value="F:haptoglobin binding"/>
    <property type="evidence" value="ECO:0007669"/>
    <property type="project" value="TreeGrafter"/>
</dbReference>
<dbReference type="GO" id="GO:0020037">
    <property type="term" value="F:heme binding"/>
    <property type="evidence" value="ECO:0007669"/>
    <property type="project" value="InterPro"/>
</dbReference>
<dbReference type="GO" id="GO:0046872">
    <property type="term" value="F:metal ion binding"/>
    <property type="evidence" value="ECO:0007669"/>
    <property type="project" value="UniProtKB-KW"/>
</dbReference>
<dbReference type="GO" id="GO:0043177">
    <property type="term" value="F:organic acid binding"/>
    <property type="evidence" value="ECO:0007669"/>
    <property type="project" value="TreeGrafter"/>
</dbReference>
<dbReference type="GO" id="GO:0019825">
    <property type="term" value="F:oxygen binding"/>
    <property type="evidence" value="ECO:0007669"/>
    <property type="project" value="InterPro"/>
</dbReference>
<dbReference type="GO" id="GO:0005344">
    <property type="term" value="F:oxygen carrier activity"/>
    <property type="evidence" value="ECO:0007669"/>
    <property type="project" value="UniProtKB-KW"/>
</dbReference>
<dbReference type="GO" id="GO:0004601">
    <property type="term" value="F:peroxidase activity"/>
    <property type="evidence" value="ECO:0007669"/>
    <property type="project" value="TreeGrafter"/>
</dbReference>
<dbReference type="GO" id="GO:0042744">
    <property type="term" value="P:hydrogen peroxide catabolic process"/>
    <property type="evidence" value="ECO:0007669"/>
    <property type="project" value="TreeGrafter"/>
</dbReference>
<dbReference type="Gene3D" id="1.10.490.10">
    <property type="entry name" value="Globins"/>
    <property type="match status" value="1"/>
</dbReference>
<dbReference type="InterPro" id="IPR000971">
    <property type="entry name" value="Globin"/>
</dbReference>
<dbReference type="InterPro" id="IPR009050">
    <property type="entry name" value="Globin-like_sf"/>
</dbReference>
<dbReference type="InterPro" id="IPR012292">
    <property type="entry name" value="Globin/Proto"/>
</dbReference>
<dbReference type="InterPro" id="IPR050056">
    <property type="entry name" value="Hemoglobin_oxygen_transport"/>
</dbReference>
<dbReference type="PANTHER" id="PTHR11442">
    <property type="entry name" value="HEMOGLOBIN FAMILY MEMBER"/>
    <property type="match status" value="1"/>
</dbReference>
<dbReference type="PANTHER" id="PTHR11442:SF100">
    <property type="entry name" value="HEMOGLOBIN SUBUNIT BETA-1"/>
    <property type="match status" value="1"/>
</dbReference>
<dbReference type="Pfam" id="PF00042">
    <property type="entry name" value="Globin"/>
    <property type="match status" value="1"/>
</dbReference>
<dbReference type="SUPFAM" id="SSF46458">
    <property type="entry name" value="Globin-like"/>
    <property type="match status" value="1"/>
</dbReference>
<dbReference type="PROSITE" id="PS01033">
    <property type="entry name" value="GLOBIN"/>
    <property type="match status" value="1"/>
</dbReference>
<keyword id="KW-0903">Direct protein sequencing</keyword>
<keyword id="KW-0349">Heme</keyword>
<keyword id="KW-0408">Iron</keyword>
<keyword id="KW-0479">Metal-binding</keyword>
<keyword id="KW-0561">Oxygen transport</keyword>
<keyword id="KW-0813">Transport</keyword>
<proteinExistence type="evidence at protein level"/>
<feature type="chain" id="PRO_0000443118" description="Hemoglobin subunit beta-3" evidence="3">
    <location>
        <begin position="1"/>
        <end position="135"/>
    </location>
</feature>
<feature type="domain" description="Globin" evidence="2">
    <location>
        <begin position="2"/>
        <end position="135"/>
    </location>
</feature>
<feature type="binding site" description="distal binding residue" evidence="1">
    <location>
        <position position="57"/>
    </location>
    <ligand>
        <name>heme b</name>
        <dbReference type="ChEBI" id="CHEBI:60344"/>
    </ligand>
    <ligandPart>
        <name>Fe</name>
        <dbReference type="ChEBI" id="CHEBI:18248"/>
    </ligandPart>
</feature>
<feature type="binding site" description="proximal binding residue" evidence="1">
    <location>
        <position position="81"/>
    </location>
    <ligand>
        <name>heme b</name>
        <dbReference type="ChEBI" id="CHEBI:60344"/>
    </ligand>
    <ligandPart>
        <name>Fe</name>
        <dbReference type="ChEBI" id="CHEBI:18248"/>
    </ligandPart>
</feature>
<feature type="non-consecutive residues" evidence="4">
    <location>
        <begin position="48"/>
        <end position="49"/>
    </location>
</feature>
<feature type="non-consecutive residues" evidence="4">
    <location>
        <begin position="78"/>
        <end position="79"/>
    </location>
</feature>
<name>HBB3_SOMMI</name>
<protein>
    <recommendedName>
        <fullName evidence="6">Hemoglobin subunit beta-3</fullName>
    </recommendedName>
    <alternativeName>
        <fullName evidence="6">Beta-3-globin</fullName>
    </alternativeName>
    <alternativeName>
        <fullName evidence="4">Hemoglobin beta-3 chain</fullName>
    </alternativeName>
</protein>
<sequence>VHWTAEEKALVNVVWSKTDHQAVVANALGRLFVVYPWTKTYFTKFNGKAGDSTVQTHAGKVVSALTLAYNHIDDVKPHFKHYEGFHVDPENFRLLANCLNVELGHTLHKEFTPELHAAWNKFSNVVVDALSKAYQ</sequence>
<organism evidence="4">
    <name type="scientific">Somniosus microcephalus</name>
    <name type="common">Greenland sleeper shark</name>
    <name type="synonym">Squalus microcephalus</name>
    <dbReference type="NCBI Taxonomy" id="191813"/>
    <lineage>
        <taxon>Eukaryota</taxon>
        <taxon>Metazoa</taxon>
        <taxon>Chordata</taxon>
        <taxon>Craniata</taxon>
        <taxon>Vertebrata</taxon>
        <taxon>Chondrichthyes</taxon>
        <taxon>Elasmobranchii</taxon>
        <taxon>Squalomorphii</taxon>
        <taxon>Squaliformes</taxon>
        <taxon>Somniosidae</taxon>
        <taxon>Somniosus</taxon>
    </lineage>
</organism>
<reference evidence="5" key="1">
    <citation type="journal article" date="2017" name="PLoS ONE">
        <title>The Greenland shark Somniosus microcephalus-Hemoglobins and ligand-binding properties.</title>
        <authorList>
            <person name="Russo R."/>
            <person name="Giordano D."/>
            <person name="Paredi G."/>
            <person name="Marchesani F."/>
            <person name="Milazzo L."/>
            <person name="Altomonte G."/>
            <person name="Del Canale P."/>
            <person name="Abbruzzetti S."/>
            <person name="Ascenzi P."/>
            <person name="di Prisco G."/>
            <person name="Viappiani C."/>
            <person name="Fago A."/>
            <person name="Bruno S."/>
            <person name="Smulevich G."/>
            <person name="Verde C."/>
        </authorList>
    </citation>
    <scope>PROTEIN SEQUENCE</scope>
    <scope>FUNCTION</scope>
    <scope>SUBUNIT</scope>
    <scope>TISSUE SPECIFICITY</scope>
    <scope>IDENTIFICATION BY MASS SPECTROMETRY</scope>
    <source>
        <tissue evidence="4">Erythrocyte</tissue>
    </source>
</reference>
<accession>C0HJZ5</accession>
<comment type="function">
    <text evidence="3">Involved in oxygen transport from gills to the various peripheral tissues.</text>
</comment>
<comment type="subunit">
    <text evidence="3">Hb 3 is a heterotetramer of two alpha and two beta-3 chains.</text>
</comment>
<comment type="tissue specificity">
    <text evidence="3">Red blood cells (at protein level).</text>
</comment>
<comment type="miscellaneous">
    <text evidence="3">This fish has three hemoglobins: Hb 1, Hb 2 and Hb 3. They all have a similar Bohr effect.</text>
</comment>
<comment type="similarity">
    <text evidence="2">Belongs to the globin family.</text>
</comment>
<gene>
    <name evidence="6" type="primary">HBB3</name>
</gene>